<name>BH160_ARATH</name>
<protein>
    <recommendedName>
        <fullName>Transcription factor bHLH160</fullName>
    </recommendedName>
    <alternativeName>
        <fullName>Basic helix-loop-helix protein 160</fullName>
        <shortName evidence="3">AtbHLH160</shortName>
        <shortName>bHLH 160</shortName>
    </alternativeName>
    <alternativeName>
        <fullName>bHLH transcription factor bHLH160</fullName>
    </alternativeName>
</protein>
<sequence length="234" mass="26390">MSSQPNHQTSISSLLHDRLHIPPAETIVEKESAEKDTCQSQRKRKEPVLHEVDGSSSGAAKKQDHNAKERLRRMRLHASYLTLGTLLPDHSSSSSKKKWSAPSIIDNVITYIPKLQNEVGELTLRKQKLVELERRGPSIRAISVLELGESGYEAVVQICLKKENEDEFSNLLHVMEVQGLSVLSASTSQVCREQRVVCYNFHVKMDEKPCEGDDYITVLKNNIISSLRDNTKCK</sequence>
<gene>
    <name evidence="3" type="primary">BHLH160</name>
    <name evidence="5" type="ordered locus">At1g71200</name>
    <name evidence="6" type="ORF">F23N20.19</name>
</gene>
<comment type="subcellular location">
    <subcellularLocation>
        <location evidence="1">Nucleus</location>
    </subcellularLocation>
</comment>
<comment type="similarity">
    <text evidence="4">Belongs to the bHLH protein family.</text>
</comment>
<comment type="sequence caution" evidence="4">
    <conflict type="erroneous gene model prediction">
        <sequence resource="EMBL-CDS" id="AAG51686"/>
    </conflict>
</comment>
<proteinExistence type="inferred from homology"/>
<accession>F4I8F9</accession>
<accession>Q9C988</accession>
<organism>
    <name type="scientific">Arabidopsis thaliana</name>
    <name type="common">Mouse-ear cress</name>
    <dbReference type="NCBI Taxonomy" id="3702"/>
    <lineage>
        <taxon>Eukaryota</taxon>
        <taxon>Viridiplantae</taxon>
        <taxon>Streptophyta</taxon>
        <taxon>Embryophyta</taxon>
        <taxon>Tracheophyta</taxon>
        <taxon>Spermatophyta</taxon>
        <taxon>Magnoliopsida</taxon>
        <taxon>eudicotyledons</taxon>
        <taxon>Gunneridae</taxon>
        <taxon>Pentapetalae</taxon>
        <taxon>rosids</taxon>
        <taxon>malvids</taxon>
        <taxon>Brassicales</taxon>
        <taxon>Brassicaceae</taxon>
        <taxon>Camelineae</taxon>
        <taxon>Arabidopsis</taxon>
    </lineage>
</organism>
<dbReference type="EMBL" id="AC016972">
    <property type="protein sequence ID" value="AAG51686.1"/>
    <property type="status" value="ALT_SEQ"/>
    <property type="molecule type" value="Genomic_DNA"/>
</dbReference>
<dbReference type="EMBL" id="CP002684">
    <property type="protein sequence ID" value="AEE35172.1"/>
    <property type="molecule type" value="Genomic_DNA"/>
</dbReference>
<dbReference type="RefSeq" id="NP_177276.4">
    <property type="nucleotide sequence ID" value="NM_105789.5"/>
</dbReference>
<dbReference type="SMR" id="F4I8F9"/>
<dbReference type="FunCoup" id="F4I8F9">
    <property type="interactions" value="81"/>
</dbReference>
<dbReference type="STRING" id="3702.F4I8F9"/>
<dbReference type="iPTMnet" id="F4I8F9"/>
<dbReference type="PaxDb" id="3702-AT1G71200.1"/>
<dbReference type="EnsemblPlants" id="AT1G71200.1">
    <property type="protein sequence ID" value="AT1G71200.1"/>
    <property type="gene ID" value="AT1G71200"/>
</dbReference>
<dbReference type="GeneID" id="843460"/>
<dbReference type="Gramene" id="AT1G71200.1">
    <property type="protein sequence ID" value="AT1G71200.1"/>
    <property type="gene ID" value="AT1G71200"/>
</dbReference>
<dbReference type="KEGG" id="ath:AT1G71200"/>
<dbReference type="Araport" id="AT1G71200"/>
<dbReference type="TAIR" id="AT1G71200">
    <property type="gene designation" value="CITF1"/>
</dbReference>
<dbReference type="eggNOG" id="ENOG502S1VN">
    <property type="taxonomic scope" value="Eukaryota"/>
</dbReference>
<dbReference type="HOGENOM" id="CLU_101542_0_0_1"/>
<dbReference type="InParanoid" id="F4I8F9"/>
<dbReference type="OMA" id="FKFFCTI"/>
<dbReference type="PRO" id="PR:F4I8F9"/>
<dbReference type="Proteomes" id="UP000006548">
    <property type="component" value="Chromosome 1"/>
</dbReference>
<dbReference type="ExpressionAtlas" id="F4I8F9">
    <property type="expression patterns" value="baseline and differential"/>
</dbReference>
<dbReference type="GO" id="GO:0005634">
    <property type="term" value="C:nucleus"/>
    <property type="evidence" value="ECO:0007669"/>
    <property type="project" value="UniProtKB-SubCell"/>
</dbReference>
<dbReference type="GO" id="GO:0003677">
    <property type="term" value="F:DNA binding"/>
    <property type="evidence" value="ECO:0007669"/>
    <property type="project" value="UniProtKB-KW"/>
</dbReference>
<dbReference type="GO" id="GO:0003700">
    <property type="term" value="F:DNA-binding transcription factor activity"/>
    <property type="evidence" value="ECO:0000250"/>
    <property type="project" value="TAIR"/>
</dbReference>
<dbReference type="GO" id="GO:0046983">
    <property type="term" value="F:protein dimerization activity"/>
    <property type="evidence" value="ECO:0007669"/>
    <property type="project" value="InterPro"/>
</dbReference>
<dbReference type="GO" id="GO:0071280">
    <property type="term" value="P:cellular response to copper ion"/>
    <property type="evidence" value="ECO:0000315"/>
    <property type="project" value="TAIR"/>
</dbReference>
<dbReference type="GO" id="GO:0006355">
    <property type="term" value="P:regulation of DNA-templated transcription"/>
    <property type="evidence" value="ECO:0000304"/>
    <property type="project" value="TAIR"/>
</dbReference>
<dbReference type="GO" id="GO:0006357">
    <property type="term" value="P:regulation of transcription by RNA polymerase II"/>
    <property type="evidence" value="ECO:0007669"/>
    <property type="project" value="InterPro"/>
</dbReference>
<dbReference type="FunFam" id="4.10.280.10:FF:000148">
    <property type="entry name" value="Basic helix-loop-helix (BHLH) DNA-binding superfamily protein"/>
    <property type="match status" value="1"/>
</dbReference>
<dbReference type="Gene3D" id="4.10.280.10">
    <property type="entry name" value="Helix-loop-helix DNA-binding domain"/>
    <property type="match status" value="1"/>
</dbReference>
<dbReference type="InterPro" id="IPR011598">
    <property type="entry name" value="bHLH_dom"/>
</dbReference>
<dbReference type="InterPro" id="IPR036638">
    <property type="entry name" value="HLH_DNA-bd_sf"/>
</dbReference>
<dbReference type="InterPro" id="IPR015660">
    <property type="entry name" value="MASH1/Ascl1a-like"/>
</dbReference>
<dbReference type="PANTHER" id="PTHR13935">
    <property type="entry name" value="ACHAETE-SCUTE TRANSCRIPTION FACTOR-RELATED"/>
    <property type="match status" value="1"/>
</dbReference>
<dbReference type="PANTHER" id="PTHR13935:SF104">
    <property type="entry name" value="TRANSCRIPTION FACTOR BHLH160"/>
    <property type="match status" value="1"/>
</dbReference>
<dbReference type="Pfam" id="PF00010">
    <property type="entry name" value="HLH"/>
    <property type="match status" value="1"/>
</dbReference>
<dbReference type="SMART" id="SM00353">
    <property type="entry name" value="HLH"/>
    <property type="match status" value="1"/>
</dbReference>
<dbReference type="SUPFAM" id="SSF47459">
    <property type="entry name" value="HLH, helix-loop-helix DNA-binding domain"/>
    <property type="match status" value="1"/>
</dbReference>
<dbReference type="PROSITE" id="PS50888">
    <property type="entry name" value="BHLH"/>
    <property type="match status" value="1"/>
</dbReference>
<keyword id="KW-0238">DNA-binding</keyword>
<keyword id="KW-0539">Nucleus</keyword>
<keyword id="KW-1185">Reference proteome</keyword>
<keyword id="KW-0804">Transcription</keyword>
<keyword id="KW-0805">Transcription regulation</keyword>
<reference key="1">
    <citation type="journal article" date="2000" name="Nature">
        <title>Sequence and analysis of chromosome 1 of the plant Arabidopsis thaliana.</title>
        <authorList>
            <person name="Theologis A."/>
            <person name="Ecker J.R."/>
            <person name="Palm C.J."/>
            <person name="Federspiel N.A."/>
            <person name="Kaul S."/>
            <person name="White O."/>
            <person name="Alonso J."/>
            <person name="Altafi H."/>
            <person name="Araujo R."/>
            <person name="Bowman C.L."/>
            <person name="Brooks S.Y."/>
            <person name="Buehler E."/>
            <person name="Chan A."/>
            <person name="Chao Q."/>
            <person name="Chen H."/>
            <person name="Cheuk R.F."/>
            <person name="Chin C.W."/>
            <person name="Chung M.K."/>
            <person name="Conn L."/>
            <person name="Conway A.B."/>
            <person name="Conway A.R."/>
            <person name="Creasy T.H."/>
            <person name="Dewar K."/>
            <person name="Dunn P."/>
            <person name="Etgu P."/>
            <person name="Feldblyum T.V."/>
            <person name="Feng J.-D."/>
            <person name="Fong B."/>
            <person name="Fujii C.Y."/>
            <person name="Gill J.E."/>
            <person name="Goldsmith A.D."/>
            <person name="Haas B."/>
            <person name="Hansen N.F."/>
            <person name="Hughes B."/>
            <person name="Huizar L."/>
            <person name="Hunter J.L."/>
            <person name="Jenkins J."/>
            <person name="Johnson-Hopson C."/>
            <person name="Khan S."/>
            <person name="Khaykin E."/>
            <person name="Kim C.J."/>
            <person name="Koo H.L."/>
            <person name="Kremenetskaia I."/>
            <person name="Kurtz D.B."/>
            <person name="Kwan A."/>
            <person name="Lam B."/>
            <person name="Langin-Hooper S."/>
            <person name="Lee A."/>
            <person name="Lee J.M."/>
            <person name="Lenz C.A."/>
            <person name="Li J.H."/>
            <person name="Li Y.-P."/>
            <person name="Lin X."/>
            <person name="Liu S.X."/>
            <person name="Liu Z.A."/>
            <person name="Luros J.S."/>
            <person name="Maiti R."/>
            <person name="Marziali A."/>
            <person name="Militscher J."/>
            <person name="Miranda M."/>
            <person name="Nguyen M."/>
            <person name="Nierman W.C."/>
            <person name="Osborne B.I."/>
            <person name="Pai G."/>
            <person name="Peterson J."/>
            <person name="Pham P.K."/>
            <person name="Rizzo M."/>
            <person name="Rooney T."/>
            <person name="Rowley D."/>
            <person name="Sakano H."/>
            <person name="Salzberg S.L."/>
            <person name="Schwartz J.R."/>
            <person name="Shinn P."/>
            <person name="Southwick A.M."/>
            <person name="Sun H."/>
            <person name="Tallon L.J."/>
            <person name="Tambunga G."/>
            <person name="Toriumi M.J."/>
            <person name="Town C.D."/>
            <person name="Utterback T."/>
            <person name="Van Aken S."/>
            <person name="Vaysberg M."/>
            <person name="Vysotskaia V.S."/>
            <person name="Walker M."/>
            <person name="Wu D."/>
            <person name="Yu G."/>
            <person name="Fraser C.M."/>
            <person name="Venter J.C."/>
            <person name="Davis R.W."/>
        </authorList>
    </citation>
    <scope>NUCLEOTIDE SEQUENCE [LARGE SCALE GENOMIC DNA]</scope>
    <source>
        <strain>cv. Columbia</strain>
    </source>
</reference>
<reference key="2">
    <citation type="journal article" date="2017" name="Plant J.">
        <title>Araport11: a complete reannotation of the Arabidopsis thaliana reference genome.</title>
        <authorList>
            <person name="Cheng C.Y."/>
            <person name="Krishnakumar V."/>
            <person name="Chan A.P."/>
            <person name="Thibaud-Nissen F."/>
            <person name="Schobel S."/>
            <person name="Town C.D."/>
        </authorList>
    </citation>
    <scope>GENOME REANNOTATION</scope>
    <source>
        <strain>cv. Columbia</strain>
    </source>
</reference>
<reference key="3">
    <citation type="journal article" date="2003" name="Plant Cell">
        <title>Update on the basic helix-loop-helix transcription factor gene family in Arabidopsis thaliana.</title>
        <authorList>
            <person name="Bailey P.C."/>
            <person name="Martin C."/>
            <person name="Toledo-Ortiz G."/>
            <person name="Quail P.H."/>
            <person name="Huq E."/>
            <person name="Heim M.A."/>
            <person name="Jakoby M."/>
            <person name="Werber M."/>
            <person name="Weisshaar B."/>
        </authorList>
    </citation>
    <scope>GENE FAMILY</scope>
    <scope>NOMENCLATURE</scope>
</reference>
<feature type="chain" id="PRO_0000439393" description="Transcription factor bHLH160">
    <location>
        <begin position="1"/>
        <end position="234"/>
    </location>
</feature>
<feature type="domain" description="bHLH" evidence="1">
    <location>
        <begin position="60"/>
        <end position="115"/>
    </location>
</feature>
<feature type="region of interest" description="Disordered" evidence="2">
    <location>
        <begin position="1"/>
        <end position="67"/>
    </location>
</feature>
<feature type="compositionally biased region" description="Polar residues" evidence="2">
    <location>
        <begin position="1"/>
        <end position="13"/>
    </location>
</feature>
<feature type="compositionally biased region" description="Basic and acidic residues" evidence="2">
    <location>
        <begin position="27"/>
        <end position="37"/>
    </location>
</feature>
<evidence type="ECO:0000255" key="1">
    <source>
        <dbReference type="PROSITE-ProRule" id="PRU00981"/>
    </source>
</evidence>
<evidence type="ECO:0000256" key="2">
    <source>
        <dbReference type="SAM" id="MobiDB-lite"/>
    </source>
</evidence>
<evidence type="ECO:0000303" key="3">
    <source>
    </source>
</evidence>
<evidence type="ECO:0000305" key="4"/>
<evidence type="ECO:0000312" key="5">
    <source>
        <dbReference type="Araport" id="AT1G71200"/>
    </source>
</evidence>
<evidence type="ECO:0000312" key="6">
    <source>
        <dbReference type="EMBL" id="AAG51686.1"/>
    </source>
</evidence>